<evidence type="ECO:0000250" key="1"/>
<evidence type="ECO:0000250" key="2">
    <source>
        <dbReference type="UniProtKB" id="P00157"/>
    </source>
</evidence>
<evidence type="ECO:0000255" key="3">
    <source>
        <dbReference type="PROSITE-ProRule" id="PRU00967"/>
    </source>
</evidence>
<evidence type="ECO:0000255" key="4">
    <source>
        <dbReference type="PROSITE-ProRule" id="PRU00968"/>
    </source>
</evidence>
<name>CYB_GYMRO</name>
<dbReference type="EMBL" id="AF160574">
    <property type="protein sequence ID" value="AAF15190.1"/>
    <property type="molecule type" value="Genomic_DNA"/>
</dbReference>
<dbReference type="SMR" id="Q9T7Q5"/>
<dbReference type="GO" id="GO:0005743">
    <property type="term" value="C:mitochondrial inner membrane"/>
    <property type="evidence" value="ECO:0007669"/>
    <property type="project" value="UniProtKB-SubCell"/>
</dbReference>
<dbReference type="GO" id="GO:0045275">
    <property type="term" value="C:respiratory chain complex III"/>
    <property type="evidence" value="ECO:0007669"/>
    <property type="project" value="InterPro"/>
</dbReference>
<dbReference type="GO" id="GO:0046872">
    <property type="term" value="F:metal ion binding"/>
    <property type="evidence" value="ECO:0007669"/>
    <property type="project" value="UniProtKB-KW"/>
</dbReference>
<dbReference type="GO" id="GO:0008121">
    <property type="term" value="F:ubiquinol-cytochrome-c reductase activity"/>
    <property type="evidence" value="ECO:0007669"/>
    <property type="project" value="InterPro"/>
</dbReference>
<dbReference type="GO" id="GO:0006122">
    <property type="term" value="P:mitochondrial electron transport, ubiquinol to cytochrome c"/>
    <property type="evidence" value="ECO:0007669"/>
    <property type="project" value="TreeGrafter"/>
</dbReference>
<dbReference type="CDD" id="cd00290">
    <property type="entry name" value="cytochrome_b_C"/>
    <property type="match status" value="1"/>
</dbReference>
<dbReference type="CDD" id="cd00284">
    <property type="entry name" value="Cytochrome_b_N"/>
    <property type="match status" value="1"/>
</dbReference>
<dbReference type="FunFam" id="1.20.810.10:FF:000002">
    <property type="entry name" value="Cytochrome b"/>
    <property type="match status" value="1"/>
</dbReference>
<dbReference type="Gene3D" id="1.20.810.10">
    <property type="entry name" value="Cytochrome Bc1 Complex, Chain C"/>
    <property type="match status" value="1"/>
</dbReference>
<dbReference type="InterPro" id="IPR005798">
    <property type="entry name" value="Cyt_b/b6_C"/>
</dbReference>
<dbReference type="InterPro" id="IPR036150">
    <property type="entry name" value="Cyt_b/b6_C_sf"/>
</dbReference>
<dbReference type="InterPro" id="IPR005797">
    <property type="entry name" value="Cyt_b/b6_N"/>
</dbReference>
<dbReference type="InterPro" id="IPR027387">
    <property type="entry name" value="Cytb/b6-like_sf"/>
</dbReference>
<dbReference type="InterPro" id="IPR030689">
    <property type="entry name" value="Cytochrome_b"/>
</dbReference>
<dbReference type="InterPro" id="IPR048260">
    <property type="entry name" value="Cytochrome_b_C_euk/bac"/>
</dbReference>
<dbReference type="InterPro" id="IPR048259">
    <property type="entry name" value="Cytochrome_b_N_euk/bac"/>
</dbReference>
<dbReference type="InterPro" id="IPR016174">
    <property type="entry name" value="Di-haem_cyt_TM"/>
</dbReference>
<dbReference type="PANTHER" id="PTHR19271">
    <property type="entry name" value="CYTOCHROME B"/>
    <property type="match status" value="1"/>
</dbReference>
<dbReference type="PANTHER" id="PTHR19271:SF16">
    <property type="entry name" value="CYTOCHROME B"/>
    <property type="match status" value="1"/>
</dbReference>
<dbReference type="Pfam" id="PF00032">
    <property type="entry name" value="Cytochrom_B_C"/>
    <property type="match status" value="1"/>
</dbReference>
<dbReference type="Pfam" id="PF00033">
    <property type="entry name" value="Cytochrome_B"/>
    <property type="match status" value="1"/>
</dbReference>
<dbReference type="PIRSF" id="PIRSF038885">
    <property type="entry name" value="COB"/>
    <property type="match status" value="1"/>
</dbReference>
<dbReference type="SUPFAM" id="SSF81648">
    <property type="entry name" value="a domain/subunit of cytochrome bc1 complex (Ubiquinol-cytochrome c reductase)"/>
    <property type="match status" value="1"/>
</dbReference>
<dbReference type="SUPFAM" id="SSF81342">
    <property type="entry name" value="Transmembrane di-heme cytochromes"/>
    <property type="match status" value="1"/>
</dbReference>
<dbReference type="PROSITE" id="PS51003">
    <property type="entry name" value="CYTB_CTER"/>
    <property type="match status" value="1"/>
</dbReference>
<dbReference type="PROSITE" id="PS51002">
    <property type="entry name" value="CYTB_NTER"/>
    <property type="match status" value="1"/>
</dbReference>
<proteinExistence type="inferred from homology"/>
<geneLocation type="mitochondrion"/>
<feature type="chain" id="PRO_0000061018" description="Cytochrome b">
    <location>
        <begin position="1"/>
        <end position="380"/>
    </location>
</feature>
<feature type="transmembrane region" description="Helical" evidence="2">
    <location>
        <begin position="33"/>
        <end position="53"/>
    </location>
</feature>
<feature type="transmembrane region" description="Helical" evidence="2">
    <location>
        <begin position="77"/>
        <end position="98"/>
    </location>
</feature>
<feature type="transmembrane region" description="Helical" evidence="2">
    <location>
        <begin position="113"/>
        <end position="133"/>
    </location>
</feature>
<feature type="transmembrane region" description="Helical" evidence="2">
    <location>
        <begin position="178"/>
        <end position="198"/>
    </location>
</feature>
<feature type="transmembrane region" description="Helical" evidence="2">
    <location>
        <begin position="226"/>
        <end position="246"/>
    </location>
</feature>
<feature type="transmembrane region" description="Helical" evidence="2">
    <location>
        <begin position="288"/>
        <end position="308"/>
    </location>
</feature>
<feature type="transmembrane region" description="Helical" evidence="2">
    <location>
        <begin position="320"/>
        <end position="340"/>
    </location>
</feature>
<feature type="transmembrane region" description="Helical" evidence="2">
    <location>
        <begin position="347"/>
        <end position="367"/>
    </location>
</feature>
<feature type="binding site" description="axial binding residue" evidence="2">
    <location>
        <position position="83"/>
    </location>
    <ligand>
        <name>heme b</name>
        <dbReference type="ChEBI" id="CHEBI:60344"/>
        <label>b562</label>
    </ligand>
    <ligandPart>
        <name>Fe</name>
        <dbReference type="ChEBI" id="CHEBI:18248"/>
    </ligandPart>
</feature>
<feature type="binding site" description="axial binding residue" evidence="2">
    <location>
        <position position="97"/>
    </location>
    <ligand>
        <name>heme b</name>
        <dbReference type="ChEBI" id="CHEBI:60344"/>
        <label>b566</label>
    </ligand>
    <ligandPart>
        <name>Fe</name>
        <dbReference type="ChEBI" id="CHEBI:18248"/>
    </ligandPart>
</feature>
<feature type="binding site" description="axial binding residue" evidence="2">
    <location>
        <position position="182"/>
    </location>
    <ligand>
        <name>heme b</name>
        <dbReference type="ChEBI" id="CHEBI:60344"/>
        <label>b562</label>
    </ligand>
    <ligandPart>
        <name>Fe</name>
        <dbReference type="ChEBI" id="CHEBI:18248"/>
    </ligandPart>
</feature>
<feature type="binding site" description="axial binding residue" evidence="2">
    <location>
        <position position="196"/>
    </location>
    <ligand>
        <name>heme b</name>
        <dbReference type="ChEBI" id="CHEBI:60344"/>
        <label>b566</label>
    </ligand>
    <ligandPart>
        <name>Fe</name>
        <dbReference type="ChEBI" id="CHEBI:18248"/>
    </ligandPart>
</feature>
<feature type="binding site" evidence="2">
    <location>
        <position position="201"/>
    </location>
    <ligand>
        <name>a ubiquinone</name>
        <dbReference type="ChEBI" id="CHEBI:16389"/>
    </ligand>
</feature>
<sequence>MTNIRKTHPLLKIINHSFIDLPTPSNISSWWNFGSLLGMCLIIQIATGLFLAMHYTSDTTTAFSSVTHICRDVNYGWLIRYMHANGASMFFICLFIHVGRGIYYGSYTFTETWNIGIILLFTVMATAFMGYVLPWGQMSFWGATVITNLLSAIPYIGTTLVEWIWGGFSVDKATLTRFFAFHFILPFMIAALAVVHLLFLHETGSNNPSGLNSDADKIPFHPYYTIKDILGMLLLLLLLMSLVLFAPDILGDPDNYTPANPLNTPPHIKPEWYFLFAYAILRSIPNKLGGVLALVLSILILALMPLLHTSKLRGLMFRPITQSLFWILVADLLTLTWIGGQPVEYPFIIIGQLASILYFSIILILMPLAGIIEDKILKLS</sequence>
<gene>
    <name type="primary">MT-CYB</name>
    <name type="synonym">COB</name>
    <name type="synonym">CYTB</name>
    <name type="synonym">MTCYB</name>
</gene>
<comment type="function">
    <text evidence="2">Component of the ubiquinol-cytochrome c reductase complex (complex III or cytochrome b-c1 complex) that is part of the mitochondrial respiratory chain. The b-c1 complex mediates electron transfer from ubiquinol to cytochrome c. Contributes to the generation of a proton gradient across the mitochondrial membrane that is then used for ATP synthesis.</text>
</comment>
<comment type="cofactor">
    <cofactor evidence="2">
        <name>heme b</name>
        <dbReference type="ChEBI" id="CHEBI:60344"/>
    </cofactor>
    <text evidence="2">Binds 2 heme b groups non-covalently.</text>
</comment>
<comment type="subunit">
    <text evidence="2">The cytochrome bc1 complex contains 11 subunits: 3 respiratory subunits (MT-CYB, CYC1 and UQCRFS1), 2 core proteins (UQCRC1 and UQCRC2) and 6 low-molecular weight proteins (UQCRH/QCR6, UQCRB/QCR7, UQCRQ/QCR8, UQCR10/QCR9, UQCR11/QCR10 and a cleavage product of UQCRFS1). This cytochrome bc1 complex then forms a dimer.</text>
</comment>
<comment type="subcellular location">
    <subcellularLocation>
        <location evidence="2">Mitochondrion inner membrane</location>
        <topology evidence="2">Multi-pass membrane protein</topology>
    </subcellularLocation>
</comment>
<comment type="miscellaneous">
    <text evidence="1">Heme 1 (or BL or b562) is low-potential and absorbs at about 562 nm, and heme 2 (or BH or b566) is high-potential and absorbs at about 566 nm.</text>
</comment>
<comment type="similarity">
    <text evidence="3 4">Belongs to the cytochrome b family.</text>
</comment>
<comment type="caution">
    <text evidence="2">The full-length protein contains only eight transmembrane helices, not nine as predicted by bioinformatics tools.</text>
</comment>
<keyword id="KW-0249">Electron transport</keyword>
<keyword id="KW-0349">Heme</keyword>
<keyword id="KW-0408">Iron</keyword>
<keyword id="KW-0472">Membrane</keyword>
<keyword id="KW-0479">Metal-binding</keyword>
<keyword id="KW-0496">Mitochondrion</keyword>
<keyword id="KW-0999">Mitochondrion inner membrane</keyword>
<keyword id="KW-0679">Respiratory chain</keyword>
<keyword id="KW-0812">Transmembrane</keyword>
<keyword id="KW-1133">Transmembrane helix</keyword>
<keyword id="KW-0813">Transport</keyword>
<keyword id="KW-0830">Ubiquinone</keyword>
<organism>
    <name type="scientific">Gymnuromys roberti</name>
    <name type="common">Voalavoanala</name>
    <dbReference type="NCBI Taxonomy" id="107276"/>
    <lineage>
        <taxon>Eukaryota</taxon>
        <taxon>Metazoa</taxon>
        <taxon>Chordata</taxon>
        <taxon>Craniata</taxon>
        <taxon>Vertebrata</taxon>
        <taxon>Euteleostomi</taxon>
        <taxon>Mammalia</taxon>
        <taxon>Eutheria</taxon>
        <taxon>Euarchontoglires</taxon>
        <taxon>Glires</taxon>
        <taxon>Rodentia</taxon>
        <taxon>Myomorpha</taxon>
        <taxon>Muroidea</taxon>
        <taxon>Nesomyidae</taxon>
        <taxon>Nesomyinae</taxon>
        <taxon>Gymnuromys</taxon>
    </lineage>
</organism>
<accession>Q9T7Q5</accession>
<reference key="1">
    <citation type="journal article" date="1999" name="Cladistics">
        <title>Molecular phylogeny and biogeography of Madagascar's native rodents (Muridae: Nesomyinae): a test of the single origin hypothesis.</title>
        <authorList>
            <person name="Jansa S.A."/>
            <person name="Goodman S.M."/>
            <person name="Tucker P.K."/>
        </authorList>
    </citation>
    <scope>NUCLEOTIDE SEQUENCE [GENOMIC DNA]</scope>
    <source>
        <strain>Isolate Grob594</strain>
    </source>
</reference>
<protein>
    <recommendedName>
        <fullName>Cytochrome b</fullName>
    </recommendedName>
    <alternativeName>
        <fullName>Complex III subunit 3</fullName>
    </alternativeName>
    <alternativeName>
        <fullName>Complex III subunit III</fullName>
    </alternativeName>
    <alternativeName>
        <fullName>Cytochrome b-c1 complex subunit 3</fullName>
    </alternativeName>
    <alternativeName>
        <fullName>Ubiquinol-cytochrome-c reductase complex cytochrome b subunit</fullName>
    </alternativeName>
</protein>